<organism>
    <name type="scientific">Schizosaccharomyces pombe (strain 972 / ATCC 24843)</name>
    <name type="common">Fission yeast</name>
    <dbReference type="NCBI Taxonomy" id="284812"/>
    <lineage>
        <taxon>Eukaryota</taxon>
        <taxon>Fungi</taxon>
        <taxon>Dikarya</taxon>
        <taxon>Ascomycota</taxon>
        <taxon>Taphrinomycotina</taxon>
        <taxon>Schizosaccharomycetes</taxon>
        <taxon>Schizosaccharomycetales</taxon>
        <taxon>Schizosaccharomycetaceae</taxon>
        <taxon>Schizosaccharomyces</taxon>
    </lineage>
</organism>
<gene>
    <name type="ORF">SPBPJ4664.05</name>
</gene>
<keyword id="KW-0256">Endoplasmic reticulum</keyword>
<keyword id="KW-0472">Membrane</keyword>
<keyword id="KW-1185">Reference proteome</keyword>
<keyword id="KW-0812">Transmembrane</keyword>
<keyword id="KW-1133">Transmembrane helix</keyword>
<proteinExistence type="inferred from homology"/>
<accession>Q96WV4</accession>
<protein>
    <recommendedName>
        <fullName>UPF0641 membrane protein PJ4664.05</fullName>
    </recommendedName>
</protein>
<evidence type="ECO:0000255" key="1"/>
<evidence type="ECO:0000305" key="2"/>
<feature type="chain" id="PRO_0000350751" description="UPF0641 membrane protein PJ4664.05">
    <location>
        <begin position="1"/>
        <end position="223"/>
    </location>
</feature>
<feature type="transmembrane region" description="Helical" evidence="1">
    <location>
        <begin position="10"/>
        <end position="30"/>
    </location>
</feature>
<feature type="transmembrane region" description="Helical" evidence="1">
    <location>
        <begin position="49"/>
        <end position="69"/>
    </location>
</feature>
<feature type="transmembrane region" description="Helical" evidence="1">
    <location>
        <begin position="81"/>
        <end position="101"/>
    </location>
</feature>
<feature type="transmembrane region" description="Helical" evidence="1">
    <location>
        <begin position="146"/>
        <end position="166"/>
    </location>
</feature>
<feature type="transmembrane region" description="Helical" evidence="1">
    <location>
        <begin position="190"/>
        <end position="210"/>
    </location>
</feature>
<reference key="1">
    <citation type="journal article" date="2002" name="Nature">
        <title>The genome sequence of Schizosaccharomyces pombe.</title>
        <authorList>
            <person name="Wood V."/>
            <person name="Gwilliam R."/>
            <person name="Rajandream M.A."/>
            <person name="Lyne M.H."/>
            <person name="Lyne R."/>
            <person name="Stewart A."/>
            <person name="Sgouros J.G."/>
            <person name="Peat N."/>
            <person name="Hayles J."/>
            <person name="Baker S.G."/>
            <person name="Basham D."/>
            <person name="Bowman S."/>
            <person name="Brooks K."/>
            <person name="Brown D."/>
            <person name="Brown S."/>
            <person name="Chillingworth T."/>
            <person name="Churcher C.M."/>
            <person name="Collins M."/>
            <person name="Connor R."/>
            <person name="Cronin A."/>
            <person name="Davis P."/>
            <person name="Feltwell T."/>
            <person name="Fraser A."/>
            <person name="Gentles S."/>
            <person name="Goble A."/>
            <person name="Hamlin N."/>
            <person name="Harris D.E."/>
            <person name="Hidalgo J."/>
            <person name="Hodgson G."/>
            <person name="Holroyd S."/>
            <person name="Hornsby T."/>
            <person name="Howarth S."/>
            <person name="Huckle E.J."/>
            <person name="Hunt S."/>
            <person name="Jagels K."/>
            <person name="James K.D."/>
            <person name="Jones L."/>
            <person name="Jones M."/>
            <person name="Leather S."/>
            <person name="McDonald S."/>
            <person name="McLean J."/>
            <person name="Mooney P."/>
            <person name="Moule S."/>
            <person name="Mungall K.L."/>
            <person name="Murphy L.D."/>
            <person name="Niblett D."/>
            <person name="Odell C."/>
            <person name="Oliver K."/>
            <person name="O'Neil S."/>
            <person name="Pearson D."/>
            <person name="Quail M.A."/>
            <person name="Rabbinowitsch E."/>
            <person name="Rutherford K.M."/>
            <person name="Rutter S."/>
            <person name="Saunders D."/>
            <person name="Seeger K."/>
            <person name="Sharp S."/>
            <person name="Skelton J."/>
            <person name="Simmonds M.N."/>
            <person name="Squares R."/>
            <person name="Squares S."/>
            <person name="Stevens K."/>
            <person name="Taylor K."/>
            <person name="Taylor R.G."/>
            <person name="Tivey A."/>
            <person name="Walsh S.V."/>
            <person name="Warren T."/>
            <person name="Whitehead S."/>
            <person name="Woodward J.R."/>
            <person name="Volckaert G."/>
            <person name="Aert R."/>
            <person name="Robben J."/>
            <person name="Grymonprez B."/>
            <person name="Weltjens I."/>
            <person name="Vanstreels E."/>
            <person name="Rieger M."/>
            <person name="Schaefer M."/>
            <person name="Mueller-Auer S."/>
            <person name="Gabel C."/>
            <person name="Fuchs M."/>
            <person name="Duesterhoeft A."/>
            <person name="Fritzc C."/>
            <person name="Holzer E."/>
            <person name="Moestl D."/>
            <person name="Hilbert H."/>
            <person name="Borzym K."/>
            <person name="Langer I."/>
            <person name="Beck A."/>
            <person name="Lehrach H."/>
            <person name="Reinhardt R."/>
            <person name="Pohl T.M."/>
            <person name="Eger P."/>
            <person name="Zimmermann W."/>
            <person name="Wedler H."/>
            <person name="Wambutt R."/>
            <person name="Purnelle B."/>
            <person name="Goffeau A."/>
            <person name="Cadieu E."/>
            <person name="Dreano S."/>
            <person name="Gloux S."/>
            <person name="Lelaure V."/>
            <person name="Mottier S."/>
            <person name="Galibert F."/>
            <person name="Aves S.J."/>
            <person name="Xiang Z."/>
            <person name="Hunt C."/>
            <person name="Moore K."/>
            <person name="Hurst S.M."/>
            <person name="Lucas M."/>
            <person name="Rochet M."/>
            <person name="Gaillardin C."/>
            <person name="Tallada V.A."/>
            <person name="Garzon A."/>
            <person name="Thode G."/>
            <person name="Daga R.R."/>
            <person name="Cruzado L."/>
            <person name="Jimenez J."/>
            <person name="Sanchez M."/>
            <person name="del Rey F."/>
            <person name="Benito J."/>
            <person name="Dominguez A."/>
            <person name="Revuelta J.L."/>
            <person name="Moreno S."/>
            <person name="Armstrong J."/>
            <person name="Forsburg S.L."/>
            <person name="Cerutti L."/>
            <person name="Lowe T."/>
            <person name="McCombie W.R."/>
            <person name="Paulsen I."/>
            <person name="Potashkin J."/>
            <person name="Shpakovski G.V."/>
            <person name="Ussery D."/>
            <person name="Barrell B.G."/>
            <person name="Nurse P."/>
        </authorList>
    </citation>
    <scope>NUCLEOTIDE SEQUENCE [LARGE SCALE GENOMIC DNA]</scope>
    <source>
        <strain>972 / ATCC 24843</strain>
    </source>
</reference>
<reference key="2">
    <citation type="journal article" date="2006" name="Nat. Biotechnol.">
        <title>ORFeome cloning and global analysis of protein localization in the fission yeast Schizosaccharomyces pombe.</title>
        <authorList>
            <person name="Matsuyama A."/>
            <person name="Arai R."/>
            <person name="Yashiroda Y."/>
            <person name="Shirai A."/>
            <person name="Kamata A."/>
            <person name="Sekido S."/>
            <person name="Kobayashi Y."/>
            <person name="Hashimoto A."/>
            <person name="Hamamoto M."/>
            <person name="Hiraoka Y."/>
            <person name="Horinouchi S."/>
            <person name="Yoshida M."/>
        </authorList>
    </citation>
    <scope>SUBCELLULAR LOCATION [LARGE SCALE ANALYSIS]</scope>
</reference>
<comment type="subcellular location">
    <subcellularLocation>
        <location evidence="2">Endoplasmic reticulum membrane</location>
        <topology evidence="2">Multi-pass membrane protein</topology>
    </subcellularLocation>
</comment>
<comment type="similarity">
    <text evidence="2">Belongs to the UPF0641 family.</text>
</comment>
<name>YHU5_SCHPO</name>
<sequence length="223" mass="25210">MSSAISRSRFNSFILHTVATANLIWAFNWINHNSDVAIRRSYGSHFQHLTVLSLAVTLLSMVVGLFSDISGSLTLVKLKNILLYIVCPLETIVSILYWSIVSYDRSLLIPKDRPVPLPLNFDISVHLMPTVYTLIDYLFFSPPFSLSIGPSLLVYLSIAVSYMLWVEKCYQMNKFYAYPILAILDPIKKTIFYTVASIISFSCYIVLKMVHPYALPSGAPPRS</sequence>
<dbReference type="EMBL" id="CU329671">
    <property type="protein sequence ID" value="CAC38350.2"/>
    <property type="molecule type" value="Genomic_DNA"/>
</dbReference>
<dbReference type="RefSeq" id="NP_595280.2">
    <property type="nucleotide sequence ID" value="NM_001021187.3"/>
</dbReference>
<dbReference type="SMR" id="Q96WV4"/>
<dbReference type="BioGRID" id="277892">
    <property type="interactions" value="3"/>
</dbReference>
<dbReference type="FunCoup" id="Q96WV4">
    <property type="interactions" value="171"/>
</dbReference>
<dbReference type="STRING" id="284812.Q96WV4"/>
<dbReference type="PaxDb" id="4896-SPBPJ4664.05.1"/>
<dbReference type="EnsemblFungi" id="SPBPJ4664.05.1">
    <property type="protein sequence ID" value="SPBPJ4664.05.1:pep"/>
    <property type="gene ID" value="SPBPJ4664.05"/>
</dbReference>
<dbReference type="KEGG" id="spo:2541381"/>
<dbReference type="PomBase" id="SPBPJ4664.05"/>
<dbReference type="VEuPathDB" id="FungiDB:SPBPJ4664.05"/>
<dbReference type="eggNOG" id="KOG3989">
    <property type="taxonomic scope" value="Eukaryota"/>
</dbReference>
<dbReference type="HOGENOM" id="CLU_081915_0_0_1"/>
<dbReference type="InParanoid" id="Q96WV4"/>
<dbReference type="OMA" id="VINPWAD"/>
<dbReference type="PhylomeDB" id="Q96WV4"/>
<dbReference type="PRO" id="PR:Q96WV4"/>
<dbReference type="Proteomes" id="UP000002485">
    <property type="component" value="Chromosome II"/>
</dbReference>
<dbReference type="GO" id="GO:0012505">
    <property type="term" value="C:endomembrane system"/>
    <property type="evidence" value="ECO:0000318"/>
    <property type="project" value="GO_Central"/>
</dbReference>
<dbReference type="GO" id="GO:0005783">
    <property type="term" value="C:endoplasmic reticulum"/>
    <property type="evidence" value="ECO:0007005"/>
    <property type="project" value="PomBase"/>
</dbReference>
<dbReference type="GO" id="GO:0005789">
    <property type="term" value="C:endoplasmic reticulum membrane"/>
    <property type="evidence" value="ECO:0007669"/>
    <property type="project" value="UniProtKB-SubCell"/>
</dbReference>
<dbReference type="GO" id="GO:0042758">
    <property type="term" value="P:long-chain fatty acid catabolic process"/>
    <property type="evidence" value="ECO:0000266"/>
    <property type="project" value="PomBase"/>
</dbReference>
<dbReference type="InterPro" id="IPR006838">
    <property type="entry name" value="ADTRP_AIG1"/>
</dbReference>
<dbReference type="PANTHER" id="PTHR10989">
    <property type="entry name" value="ANDROGEN-INDUCED PROTEIN 1-RELATED"/>
    <property type="match status" value="1"/>
</dbReference>
<dbReference type="PANTHER" id="PTHR10989:SF16">
    <property type="entry name" value="AT02829P-RELATED"/>
    <property type="match status" value="1"/>
</dbReference>
<dbReference type="Pfam" id="PF04750">
    <property type="entry name" value="Far-17a_AIG1"/>
    <property type="match status" value="1"/>
</dbReference>